<keyword id="KW-0963">Cytoplasm</keyword>
<feature type="chain" id="PRO_0000094961" description="UPF0291 protein BT9727_1737">
    <location>
        <begin position="1"/>
        <end position="76"/>
    </location>
</feature>
<organism>
    <name type="scientific">Bacillus thuringiensis subsp. konkukian (strain 97-27)</name>
    <dbReference type="NCBI Taxonomy" id="281309"/>
    <lineage>
        <taxon>Bacteria</taxon>
        <taxon>Bacillati</taxon>
        <taxon>Bacillota</taxon>
        <taxon>Bacilli</taxon>
        <taxon>Bacillales</taxon>
        <taxon>Bacillaceae</taxon>
        <taxon>Bacillus</taxon>
        <taxon>Bacillus cereus group</taxon>
    </lineage>
</organism>
<protein>
    <recommendedName>
        <fullName evidence="1">UPF0291 protein BT9727_1737</fullName>
    </recommendedName>
</protein>
<evidence type="ECO:0000255" key="1">
    <source>
        <dbReference type="HAMAP-Rule" id="MF_01103"/>
    </source>
</evidence>
<reference key="1">
    <citation type="journal article" date="2006" name="J. Bacteriol.">
        <title>Pathogenomic sequence analysis of Bacillus cereus and Bacillus thuringiensis isolates closely related to Bacillus anthracis.</title>
        <authorList>
            <person name="Han C.S."/>
            <person name="Xie G."/>
            <person name="Challacombe J.F."/>
            <person name="Altherr M.R."/>
            <person name="Bhotika S.S."/>
            <person name="Bruce D."/>
            <person name="Campbell C.S."/>
            <person name="Campbell M.L."/>
            <person name="Chen J."/>
            <person name="Chertkov O."/>
            <person name="Cleland C."/>
            <person name="Dimitrijevic M."/>
            <person name="Doggett N.A."/>
            <person name="Fawcett J.J."/>
            <person name="Glavina T."/>
            <person name="Goodwin L.A."/>
            <person name="Hill K.K."/>
            <person name="Hitchcock P."/>
            <person name="Jackson P.J."/>
            <person name="Keim P."/>
            <person name="Kewalramani A.R."/>
            <person name="Longmire J."/>
            <person name="Lucas S."/>
            <person name="Malfatti S."/>
            <person name="McMurry K."/>
            <person name="Meincke L.J."/>
            <person name="Misra M."/>
            <person name="Moseman B.L."/>
            <person name="Mundt M."/>
            <person name="Munk A.C."/>
            <person name="Okinaka R.T."/>
            <person name="Parson-Quintana B."/>
            <person name="Reilly L.P."/>
            <person name="Richardson P."/>
            <person name="Robinson D.L."/>
            <person name="Rubin E."/>
            <person name="Saunders E."/>
            <person name="Tapia R."/>
            <person name="Tesmer J.G."/>
            <person name="Thayer N."/>
            <person name="Thompson L.S."/>
            <person name="Tice H."/>
            <person name="Ticknor L.O."/>
            <person name="Wills P.L."/>
            <person name="Brettin T.S."/>
            <person name="Gilna P."/>
        </authorList>
    </citation>
    <scope>NUCLEOTIDE SEQUENCE [LARGE SCALE GENOMIC DNA]</scope>
    <source>
        <strain>97-27</strain>
    </source>
</reference>
<sequence>MKNILFRINELSKKEKATGLTVDEKQEQQMLRQNYTQTFRGSLDSILLNTKIVDQNGLNVTPAALQDAQIRLKLSK</sequence>
<accession>Q6HK57</accession>
<comment type="subcellular location">
    <subcellularLocation>
        <location evidence="1">Cytoplasm</location>
    </subcellularLocation>
</comment>
<comment type="similarity">
    <text evidence="1">Belongs to the UPF0291 family.</text>
</comment>
<dbReference type="EMBL" id="AE017355">
    <property type="protein sequence ID" value="AAT61870.1"/>
    <property type="molecule type" value="Genomic_DNA"/>
</dbReference>
<dbReference type="RefSeq" id="WP_000789783.1">
    <property type="nucleotide sequence ID" value="NC_005957.1"/>
</dbReference>
<dbReference type="RefSeq" id="YP_036069.1">
    <property type="nucleotide sequence ID" value="NC_005957.1"/>
</dbReference>
<dbReference type="SMR" id="Q6HK57"/>
<dbReference type="KEGG" id="btk:BT9727_1737"/>
<dbReference type="PATRIC" id="fig|281309.8.peg.1830"/>
<dbReference type="HOGENOM" id="CLU_173137_0_2_9"/>
<dbReference type="Proteomes" id="UP000001301">
    <property type="component" value="Chromosome"/>
</dbReference>
<dbReference type="GO" id="GO:0005737">
    <property type="term" value="C:cytoplasm"/>
    <property type="evidence" value="ECO:0007669"/>
    <property type="project" value="UniProtKB-SubCell"/>
</dbReference>
<dbReference type="Gene3D" id="1.10.287.540">
    <property type="entry name" value="Helix hairpin bin"/>
    <property type="match status" value="1"/>
</dbReference>
<dbReference type="HAMAP" id="MF_01103">
    <property type="entry name" value="UPF0291"/>
    <property type="match status" value="1"/>
</dbReference>
<dbReference type="InterPro" id="IPR009242">
    <property type="entry name" value="DUF896"/>
</dbReference>
<dbReference type="NCBIfam" id="NF002452">
    <property type="entry name" value="PRK01631.1"/>
    <property type="match status" value="1"/>
</dbReference>
<dbReference type="PANTHER" id="PTHR37300:SF2">
    <property type="entry name" value="UPF0291 PROTEIN BC_1827"/>
    <property type="match status" value="1"/>
</dbReference>
<dbReference type="PANTHER" id="PTHR37300">
    <property type="entry name" value="UPF0291 PROTEIN CBO2609/CLC_2481"/>
    <property type="match status" value="1"/>
</dbReference>
<dbReference type="Pfam" id="PF05979">
    <property type="entry name" value="DUF896"/>
    <property type="match status" value="1"/>
</dbReference>
<dbReference type="SUPFAM" id="SSF158221">
    <property type="entry name" value="YnzC-like"/>
    <property type="match status" value="1"/>
</dbReference>
<name>Y1737_BACHK</name>
<gene>
    <name type="ordered locus">BT9727_1737</name>
</gene>
<proteinExistence type="inferred from homology"/>